<gene>
    <name type="primary">AGTR1</name>
</gene>
<protein>
    <recommendedName>
        <fullName>Type-1 angiotensin II receptor</fullName>
    </recommendedName>
    <alternativeName>
        <fullName>Angiotensin II type-1 receptor</fullName>
        <shortName>AT1 receptor</shortName>
    </alternativeName>
</protein>
<keyword id="KW-1003">Cell membrane</keyword>
<keyword id="KW-1015">Disulfide bond</keyword>
<keyword id="KW-0297">G-protein coupled receptor</keyword>
<keyword id="KW-0325">Glycoprotein</keyword>
<keyword id="KW-0449">Lipoprotein</keyword>
<keyword id="KW-0472">Membrane</keyword>
<keyword id="KW-0564">Palmitate</keyword>
<keyword id="KW-0597">Phosphoprotein</keyword>
<keyword id="KW-0675">Receptor</keyword>
<keyword id="KW-1185">Reference proteome</keyword>
<keyword id="KW-0807">Transducer</keyword>
<keyword id="KW-0812">Transmembrane</keyword>
<keyword id="KW-1133">Transmembrane helix</keyword>
<name>AGTR1_PIG</name>
<reference key="1">
    <citation type="journal article" date="1993" name="Eur. J. Pharmacol.">
        <title>Molecular cloning and characterization of the angiotensin receptor subtype in porcine aortic smooth muscle.</title>
        <authorList>
            <person name="Itazaki K."/>
            <person name="Shigeri Y."/>
            <person name="Fujimoto M."/>
        </authorList>
    </citation>
    <scope>NUCLEOTIDE SEQUENCE [MRNA]</scope>
    <scope>FUNCTION</scope>
    <source>
        <tissue>Aortic smooth muscle</tissue>
    </source>
</reference>
<accession>P30555</accession>
<evidence type="ECO:0000250" key="1">
    <source>
        <dbReference type="UniProtKB" id="P25095"/>
    </source>
</evidence>
<evidence type="ECO:0000250" key="2">
    <source>
        <dbReference type="UniProtKB" id="P30556"/>
    </source>
</evidence>
<evidence type="ECO:0000255" key="3"/>
<evidence type="ECO:0000255" key="4">
    <source>
        <dbReference type="PROSITE-ProRule" id="PRU00521"/>
    </source>
</evidence>
<evidence type="ECO:0000256" key="5">
    <source>
        <dbReference type="SAM" id="MobiDB-lite"/>
    </source>
</evidence>
<evidence type="ECO:0000269" key="6">
    <source>
    </source>
</evidence>
<feature type="chain" id="PRO_0000069158" description="Type-1 angiotensin II receptor">
    <location>
        <begin position="1"/>
        <end position="359"/>
    </location>
</feature>
<feature type="topological domain" description="Extracellular" evidence="2">
    <location>
        <begin position="1"/>
        <end position="25"/>
    </location>
</feature>
<feature type="transmembrane region" description="Helical; Name=1" evidence="2">
    <location>
        <begin position="26"/>
        <end position="55"/>
    </location>
</feature>
<feature type="topological domain" description="Cytoplasmic" evidence="2">
    <location>
        <begin position="56"/>
        <end position="61"/>
    </location>
</feature>
<feature type="transmembrane region" description="Helical; Name=2" evidence="2">
    <location>
        <begin position="62"/>
        <end position="89"/>
    </location>
</feature>
<feature type="topological domain" description="Extracellular" evidence="2">
    <location>
        <begin position="90"/>
        <end position="98"/>
    </location>
</feature>
<feature type="transmembrane region" description="Helical; Name=3" evidence="2">
    <location>
        <begin position="99"/>
        <end position="125"/>
    </location>
</feature>
<feature type="topological domain" description="Cytoplasmic" evidence="2">
    <location>
        <begin position="126"/>
        <end position="141"/>
    </location>
</feature>
<feature type="transmembrane region" description="Helical; Name=4" evidence="2">
    <location>
        <begin position="142"/>
        <end position="165"/>
    </location>
</feature>
<feature type="topological domain" description="Extracellular" evidence="2">
    <location>
        <begin position="166"/>
        <end position="190"/>
    </location>
</feature>
<feature type="transmembrane region" description="Helical; Name=5" evidence="2">
    <location>
        <begin position="191"/>
        <end position="216"/>
    </location>
</feature>
<feature type="topological domain" description="Cytoplasmic" evidence="2">
    <location>
        <begin position="217"/>
        <end position="239"/>
    </location>
</feature>
<feature type="transmembrane region" description="Helical; Name=6" evidence="2">
    <location>
        <begin position="240"/>
        <end position="268"/>
    </location>
</feature>
<feature type="topological domain" description="Extracellular" evidence="2">
    <location>
        <begin position="269"/>
        <end position="278"/>
    </location>
</feature>
<feature type="transmembrane region" description="Helical; Name=7" evidence="2">
    <location>
        <begin position="279"/>
        <end position="304"/>
    </location>
</feature>
<feature type="topological domain" description="Cytoplasmic" evidence="2">
    <location>
        <begin position="305"/>
        <end position="359"/>
    </location>
</feature>
<feature type="region of interest" description="Disordered" evidence="5">
    <location>
        <begin position="326"/>
        <end position="359"/>
    </location>
</feature>
<feature type="compositionally biased region" description="Polar residues" evidence="5">
    <location>
        <begin position="327"/>
        <end position="351"/>
    </location>
</feature>
<feature type="binding site" evidence="2">
    <location>
        <position position="15"/>
    </location>
    <ligand>
        <name>angiotensin II</name>
        <dbReference type="ChEBI" id="CHEBI:58506"/>
    </ligand>
</feature>
<feature type="binding site" evidence="2">
    <location>
        <position position="17"/>
    </location>
    <ligand>
        <name>angiotensin II</name>
        <dbReference type="ChEBI" id="CHEBI:58506"/>
    </ligand>
</feature>
<feature type="binding site" evidence="2">
    <location>
        <position position="167"/>
    </location>
    <ligand>
        <name>angiotensin II</name>
        <dbReference type="ChEBI" id="CHEBI:58506"/>
    </ligand>
</feature>
<feature type="binding site" evidence="2">
    <location>
        <position position="182"/>
    </location>
    <ligand>
        <name>angiotensin II</name>
        <dbReference type="ChEBI" id="CHEBI:58506"/>
    </ligand>
</feature>
<feature type="binding site" evidence="2">
    <location>
        <position position="183"/>
    </location>
    <ligand>
        <name>angiotensin II</name>
        <dbReference type="ChEBI" id="CHEBI:58506"/>
    </ligand>
</feature>
<feature type="binding site" evidence="2">
    <location>
        <position position="184"/>
    </location>
    <ligand>
        <name>angiotensin II</name>
        <dbReference type="ChEBI" id="CHEBI:58506"/>
    </ligand>
</feature>
<feature type="binding site" evidence="2">
    <location>
        <position position="199"/>
    </location>
    <ligand>
        <name>angiotensin II</name>
        <dbReference type="ChEBI" id="CHEBI:58506"/>
    </ligand>
</feature>
<feature type="lipid moiety-binding region" description="S-palmitoyl cysteine" evidence="3">
    <location>
        <position position="355"/>
    </location>
</feature>
<feature type="glycosylation site" description="N-linked (GlcNAc...) asparagine" evidence="3">
    <location>
        <position position="4"/>
    </location>
</feature>
<feature type="glycosylation site" description="N-linked (GlcNAc...) asparagine" evidence="3">
    <location>
        <position position="176"/>
    </location>
</feature>
<feature type="glycosylation site" description="N-linked (GlcNAc...) asparagine" evidence="3">
    <location>
        <position position="188"/>
    </location>
</feature>
<feature type="disulfide bond" evidence="2">
    <location>
        <begin position="18"/>
        <end position="274"/>
    </location>
</feature>
<feature type="disulfide bond" evidence="4">
    <location>
        <begin position="101"/>
        <end position="180"/>
    </location>
</feature>
<comment type="function">
    <text evidence="2 6">Receptor for angiotensin II, a vasoconstricting peptide, which acts as a key regulator of blood pressure and sodium retention by the kidney (PubMed:8491254). The activated receptor in turn couples to G-alpha proteins G(q) (GNAQ, GNA11, GNA14 or GNA15) and thus activates phospholipase C and increases the cytosolic Ca(2+) concentrations, which in turn triggers cellular responses such as stimulation of protein kinase C (By similarity).</text>
</comment>
<comment type="subunit">
    <text evidence="1 2">Interacts with MAS1 (By similarity). Interacts with ARRB1 (By similarity). Interacts with FLNA (via filamin repeat 21); increases PKA-mediated phosphorylation of FLNA (By similarity).</text>
</comment>
<comment type="subcellular location">
    <subcellularLocation>
        <location evidence="2">Cell membrane</location>
        <topology evidence="2">Multi-pass membrane protein</topology>
    </subcellularLocation>
</comment>
<comment type="PTM">
    <text evidence="2">C-terminal Ser or Thr residues may be phosphorylated.</text>
</comment>
<comment type="similarity">
    <text evidence="4">Belongs to the G-protein coupled receptor 1 family.</text>
</comment>
<organism>
    <name type="scientific">Sus scrofa</name>
    <name type="common">Pig</name>
    <dbReference type="NCBI Taxonomy" id="9823"/>
    <lineage>
        <taxon>Eukaryota</taxon>
        <taxon>Metazoa</taxon>
        <taxon>Chordata</taxon>
        <taxon>Craniata</taxon>
        <taxon>Vertebrata</taxon>
        <taxon>Euteleostomi</taxon>
        <taxon>Mammalia</taxon>
        <taxon>Eutheria</taxon>
        <taxon>Laurasiatheria</taxon>
        <taxon>Artiodactyla</taxon>
        <taxon>Suina</taxon>
        <taxon>Suidae</taxon>
        <taxon>Sus</taxon>
    </lineage>
</organism>
<dbReference type="EMBL" id="D11340">
    <property type="protein sequence ID" value="BAA01952.1"/>
    <property type="molecule type" value="mRNA"/>
</dbReference>
<dbReference type="RefSeq" id="XP_003132517.1">
    <property type="nucleotide sequence ID" value="XM_003132469.4"/>
</dbReference>
<dbReference type="SMR" id="P30555"/>
<dbReference type="CORUM" id="P30555"/>
<dbReference type="FunCoup" id="P30555">
    <property type="interactions" value="270"/>
</dbReference>
<dbReference type="IntAct" id="P30555">
    <property type="interactions" value="1"/>
</dbReference>
<dbReference type="STRING" id="9823.ENSSSCP00000030853"/>
<dbReference type="BindingDB" id="P30555"/>
<dbReference type="ChEMBL" id="CHEMBL5743"/>
<dbReference type="GlyCosmos" id="P30555">
    <property type="glycosylation" value="3 sites, No reported glycans"/>
</dbReference>
<dbReference type="GlyGen" id="P30555">
    <property type="glycosylation" value="3 sites"/>
</dbReference>
<dbReference type="PaxDb" id="9823-ENSSSCP00000030853"/>
<dbReference type="Ensembl" id="ENSSSCT00000034453.4">
    <property type="protein sequence ID" value="ENSSSCP00000030853.1"/>
    <property type="gene ID" value="ENSSSCG00000011695.5"/>
</dbReference>
<dbReference type="Ensembl" id="ENSSSCT00015071980.1">
    <property type="protein sequence ID" value="ENSSSCP00015028872.1"/>
    <property type="gene ID" value="ENSSSCG00015053993.1"/>
</dbReference>
<dbReference type="Ensembl" id="ENSSSCT00025038974.1">
    <property type="protein sequence ID" value="ENSSSCP00025016487.1"/>
    <property type="gene ID" value="ENSSSCG00025028692.1"/>
</dbReference>
<dbReference type="Ensembl" id="ENSSSCT00030061647.1">
    <property type="protein sequence ID" value="ENSSSCP00030028191.1"/>
    <property type="gene ID" value="ENSSSCG00030044196.1"/>
</dbReference>
<dbReference type="Ensembl" id="ENSSSCT00035009753.1">
    <property type="protein sequence ID" value="ENSSSCP00035003286.1"/>
    <property type="gene ID" value="ENSSSCG00035007839.1"/>
</dbReference>
<dbReference type="Ensembl" id="ENSSSCT00040096595.1">
    <property type="protein sequence ID" value="ENSSSCP00040042920.1"/>
    <property type="gene ID" value="ENSSSCG00040070419.1"/>
</dbReference>
<dbReference type="Ensembl" id="ENSSSCT00045055743.1">
    <property type="protein sequence ID" value="ENSSSCP00045038876.1"/>
    <property type="gene ID" value="ENSSSCG00045032665.1"/>
</dbReference>
<dbReference type="Ensembl" id="ENSSSCT00050077460.1">
    <property type="protein sequence ID" value="ENSSSCP00050033335.1"/>
    <property type="gene ID" value="ENSSSCG00050056820.1"/>
</dbReference>
<dbReference type="Ensembl" id="ENSSSCT00055042939.1">
    <property type="protein sequence ID" value="ENSSSCP00055034160.1"/>
    <property type="gene ID" value="ENSSSCG00055021872.1"/>
</dbReference>
<dbReference type="Ensembl" id="ENSSSCT00060086211.1">
    <property type="protein sequence ID" value="ENSSSCP00060037272.1"/>
    <property type="gene ID" value="ENSSSCG00060063200.1"/>
</dbReference>
<dbReference type="Ensembl" id="ENSSSCT00065097576.1">
    <property type="protein sequence ID" value="ENSSSCP00065042773.1"/>
    <property type="gene ID" value="ENSSSCG00065071012.1"/>
</dbReference>
<dbReference type="Ensembl" id="ENSSSCT00070011447.1">
    <property type="protein sequence ID" value="ENSSSCP00070009438.1"/>
    <property type="gene ID" value="ENSSSCG00070006005.1"/>
</dbReference>
<dbReference type="Ensembl" id="ENSSSCT00085038631">
    <property type="protein sequence ID" value="ENSSSCP00085026867"/>
    <property type="gene ID" value="ENSSSCG00085020259"/>
</dbReference>
<dbReference type="Ensembl" id="ENSSSCT00085038636">
    <property type="protein sequence ID" value="ENSSSCP00085026872"/>
    <property type="gene ID" value="ENSSSCG00085020259"/>
</dbReference>
<dbReference type="Ensembl" id="ENSSSCT00085038638">
    <property type="protein sequence ID" value="ENSSSCP00085026874"/>
    <property type="gene ID" value="ENSSSCG00085020259"/>
</dbReference>
<dbReference type="Ensembl" id="ENSSSCT00085038642">
    <property type="protein sequence ID" value="ENSSSCP00085026878"/>
    <property type="gene ID" value="ENSSSCG00085020259"/>
</dbReference>
<dbReference type="Ensembl" id="ENSSSCT00090045141">
    <property type="protein sequence ID" value="ENSSSCP00090027917"/>
    <property type="gene ID" value="ENSSSCG00090025571"/>
</dbReference>
<dbReference type="Ensembl" id="ENSSSCT00090045149">
    <property type="protein sequence ID" value="ENSSSCP00090027923"/>
    <property type="gene ID" value="ENSSSCG00090025571"/>
</dbReference>
<dbReference type="Ensembl" id="ENSSSCT00090045152">
    <property type="protein sequence ID" value="ENSSSCP00090027925"/>
    <property type="gene ID" value="ENSSSCG00090025571"/>
</dbReference>
<dbReference type="Ensembl" id="ENSSSCT00090045158">
    <property type="protein sequence ID" value="ENSSSCP00090027929"/>
    <property type="gene ID" value="ENSSSCG00090025571"/>
</dbReference>
<dbReference type="Ensembl" id="ENSSSCT00105022819">
    <property type="protein sequence ID" value="ENSSSCP00105016432"/>
    <property type="gene ID" value="ENSSSCG00105011521"/>
</dbReference>
<dbReference type="Ensembl" id="ENSSSCT00105022834">
    <property type="protein sequence ID" value="ENSSSCP00105016440"/>
    <property type="gene ID" value="ENSSSCG00105011521"/>
</dbReference>
<dbReference type="Ensembl" id="ENSSSCT00105022847">
    <property type="protein sequence ID" value="ENSSSCP00105016446"/>
    <property type="gene ID" value="ENSSSCG00105011521"/>
</dbReference>
<dbReference type="Ensembl" id="ENSSSCT00105022866">
    <property type="protein sequence ID" value="ENSSSCP00105016453"/>
    <property type="gene ID" value="ENSSSCG00105011521"/>
</dbReference>
<dbReference type="Ensembl" id="ENSSSCT00110002542">
    <property type="protein sequence ID" value="ENSSSCP00110001975"/>
    <property type="gene ID" value="ENSSSCG00110001281"/>
</dbReference>
<dbReference type="Ensembl" id="ENSSSCT00110002549">
    <property type="protein sequence ID" value="ENSSSCP00110001983"/>
    <property type="gene ID" value="ENSSSCG00110001281"/>
</dbReference>
<dbReference type="Ensembl" id="ENSSSCT00110002557">
    <property type="protein sequence ID" value="ENSSSCP00110001991"/>
    <property type="gene ID" value="ENSSSCG00110001281"/>
</dbReference>
<dbReference type="Ensembl" id="ENSSSCT00110002565">
    <property type="protein sequence ID" value="ENSSSCP00110001999"/>
    <property type="gene ID" value="ENSSSCG00110001281"/>
</dbReference>
<dbReference type="Ensembl" id="ENSSSCT00115013901">
    <property type="protein sequence ID" value="ENSSSCP00115013143"/>
    <property type="gene ID" value="ENSSSCG00115007963"/>
</dbReference>
<dbReference type="Ensembl" id="ENSSSCT00130031169">
    <property type="protein sequence ID" value="ENSSSCP00130021808"/>
    <property type="gene ID" value="ENSSSCG00130015722"/>
</dbReference>
<dbReference type="Ensembl" id="ENSSSCT00130031180">
    <property type="protein sequence ID" value="ENSSSCP00130021818"/>
    <property type="gene ID" value="ENSSSCG00130015722"/>
</dbReference>
<dbReference type="Ensembl" id="ENSSSCT00130031187">
    <property type="protein sequence ID" value="ENSSSCP00130021824"/>
    <property type="gene ID" value="ENSSSCG00130015722"/>
</dbReference>
<dbReference type="Ensembl" id="ENSSSCT00130031194">
    <property type="protein sequence ID" value="ENSSSCP00130021830"/>
    <property type="gene ID" value="ENSSSCG00130015722"/>
</dbReference>
<dbReference type="GeneID" id="100519976"/>
<dbReference type="KEGG" id="ssc:100519976"/>
<dbReference type="CTD" id="185"/>
<dbReference type="VGNC" id="VGNC:85191">
    <property type="gene designation" value="AGTR1"/>
</dbReference>
<dbReference type="eggNOG" id="KOG3656">
    <property type="taxonomic scope" value="Eukaryota"/>
</dbReference>
<dbReference type="GeneTree" id="ENSGT01130000278303"/>
<dbReference type="HOGENOM" id="CLU_009579_8_3_1"/>
<dbReference type="InParanoid" id="P30555"/>
<dbReference type="OMA" id="QVFHFMQ"/>
<dbReference type="OrthoDB" id="8804420at2759"/>
<dbReference type="TreeFam" id="TF330024"/>
<dbReference type="Reactome" id="R-SSC-375276">
    <property type="pathway name" value="Peptide ligand-binding receptors"/>
</dbReference>
<dbReference type="Reactome" id="R-SSC-416476">
    <property type="pathway name" value="G alpha (q) signalling events"/>
</dbReference>
<dbReference type="Reactome" id="R-SSC-8856825">
    <property type="pathway name" value="Cargo recognition for clathrin-mediated endocytosis"/>
</dbReference>
<dbReference type="Reactome" id="R-SSC-8856828">
    <property type="pathway name" value="Clathrin-mediated endocytosis"/>
</dbReference>
<dbReference type="PRO" id="PR:P30555"/>
<dbReference type="Proteomes" id="UP000008227">
    <property type="component" value="Chromosome 13"/>
</dbReference>
<dbReference type="Proteomes" id="UP000314985">
    <property type="component" value="Chromosome 13"/>
</dbReference>
<dbReference type="Proteomes" id="UP000694570">
    <property type="component" value="Unplaced"/>
</dbReference>
<dbReference type="Proteomes" id="UP000694571">
    <property type="component" value="Unplaced"/>
</dbReference>
<dbReference type="Proteomes" id="UP000694720">
    <property type="component" value="Unplaced"/>
</dbReference>
<dbReference type="Proteomes" id="UP000694722">
    <property type="component" value="Unplaced"/>
</dbReference>
<dbReference type="Proteomes" id="UP000694723">
    <property type="component" value="Unplaced"/>
</dbReference>
<dbReference type="Proteomes" id="UP000694724">
    <property type="component" value="Unplaced"/>
</dbReference>
<dbReference type="Proteomes" id="UP000694725">
    <property type="component" value="Unplaced"/>
</dbReference>
<dbReference type="Proteomes" id="UP000694726">
    <property type="component" value="Unplaced"/>
</dbReference>
<dbReference type="Proteomes" id="UP000694727">
    <property type="component" value="Unplaced"/>
</dbReference>
<dbReference type="Proteomes" id="UP000694728">
    <property type="component" value="Unplaced"/>
</dbReference>
<dbReference type="Bgee" id="ENSSSCG00000011695">
    <property type="expression patterns" value="Expressed in liver and 35 other cell types or tissues"/>
</dbReference>
<dbReference type="GO" id="GO:0005886">
    <property type="term" value="C:plasma membrane"/>
    <property type="evidence" value="ECO:0000318"/>
    <property type="project" value="GO_Central"/>
</dbReference>
<dbReference type="GO" id="GO:0001596">
    <property type="term" value="F:angiotensin type I receptor activity"/>
    <property type="evidence" value="ECO:0000314"/>
    <property type="project" value="UniProtKB"/>
</dbReference>
<dbReference type="GO" id="GO:0004945">
    <property type="term" value="F:angiotensin type II receptor activity"/>
    <property type="evidence" value="ECO:0007669"/>
    <property type="project" value="Ensembl"/>
</dbReference>
<dbReference type="GO" id="GO:0031711">
    <property type="term" value="F:bradykinin receptor binding"/>
    <property type="evidence" value="ECO:0007669"/>
    <property type="project" value="Ensembl"/>
</dbReference>
<dbReference type="GO" id="GO:0046982">
    <property type="term" value="F:protein heterodimerization activity"/>
    <property type="evidence" value="ECO:0007669"/>
    <property type="project" value="Ensembl"/>
</dbReference>
<dbReference type="GO" id="GO:0019722">
    <property type="term" value="P:calcium-mediated signaling"/>
    <property type="evidence" value="ECO:0007669"/>
    <property type="project" value="Ensembl"/>
</dbReference>
<dbReference type="GO" id="GO:0060326">
    <property type="term" value="P:cell chemotaxis"/>
    <property type="evidence" value="ECO:0007669"/>
    <property type="project" value="Ensembl"/>
</dbReference>
<dbReference type="GO" id="GO:0007186">
    <property type="term" value="P:G protein-coupled receptor signaling pathway"/>
    <property type="evidence" value="ECO:0000318"/>
    <property type="project" value="GO_Central"/>
</dbReference>
<dbReference type="GO" id="GO:0006954">
    <property type="term" value="P:inflammatory response"/>
    <property type="evidence" value="ECO:0000318"/>
    <property type="project" value="GO_Central"/>
</dbReference>
<dbReference type="GO" id="GO:0001822">
    <property type="term" value="P:kidney development"/>
    <property type="evidence" value="ECO:0007669"/>
    <property type="project" value="Ensembl"/>
</dbReference>
<dbReference type="GO" id="GO:0002034">
    <property type="term" value="P:maintenance of blood vessel diameter homeostasis by renin-angiotensin"/>
    <property type="evidence" value="ECO:0000250"/>
    <property type="project" value="UniProtKB"/>
</dbReference>
<dbReference type="GO" id="GO:1903589">
    <property type="term" value="P:positive regulation of blood vessel endothelial cell proliferation involved in sprouting angiogenesis"/>
    <property type="evidence" value="ECO:0007669"/>
    <property type="project" value="Ensembl"/>
</dbReference>
<dbReference type="GO" id="GO:0007204">
    <property type="term" value="P:positive regulation of cytosolic calcium ion concentration"/>
    <property type="evidence" value="ECO:0000318"/>
    <property type="project" value="GO_Central"/>
</dbReference>
<dbReference type="GO" id="GO:0010744">
    <property type="term" value="P:positive regulation of macrophage derived foam cell differentiation"/>
    <property type="evidence" value="ECO:0007669"/>
    <property type="project" value="Ensembl"/>
</dbReference>
<dbReference type="GO" id="GO:0051247">
    <property type="term" value="P:positive regulation of protein metabolic process"/>
    <property type="evidence" value="ECO:0007669"/>
    <property type="project" value="Ensembl"/>
</dbReference>
<dbReference type="GO" id="GO:0019229">
    <property type="term" value="P:regulation of vasoconstriction"/>
    <property type="evidence" value="ECO:0007669"/>
    <property type="project" value="Ensembl"/>
</dbReference>
<dbReference type="GO" id="GO:0007266">
    <property type="term" value="P:Rho protein signal transduction"/>
    <property type="evidence" value="ECO:0007669"/>
    <property type="project" value="Ensembl"/>
</dbReference>
<dbReference type="GO" id="GO:0046718">
    <property type="term" value="P:symbiont entry into host cell"/>
    <property type="evidence" value="ECO:0007669"/>
    <property type="project" value="Ensembl"/>
</dbReference>
<dbReference type="CDD" id="cd15192">
    <property type="entry name" value="7tmA_AT1R"/>
    <property type="match status" value="1"/>
</dbReference>
<dbReference type="FunFam" id="1.20.1070.10:FF:000088">
    <property type="entry name" value="Angiotensin II receptor type 1"/>
    <property type="match status" value="1"/>
</dbReference>
<dbReference type="Gene3D" id="1.20.1070.10">
    <property type="entry name" value="Rhodopsin 7-helix transmembrane proteins"/>
    <property type="match status" value="1"/>
</dbReference>
<dbReference type="InterPro" id="IPR000190">
    <property type="entry name" value="ATII_AT1_rcpt"/>
</dbReference>
<dbReference type="InterPro" id="IPR000248">
    <property type="entry name" value="ATII_rcpt"/>
</dbReference>
<dbReference type="InterPro" id="IPR050119">
    <property type="entry name" value="CCR1-9-like"/>
</dbReference>
<dbReference type="InterPro" id="IPR000276">
    <property type="entry name" value="GPCR_Rhodpsn"/>
</dbReference>
<dbReference type="InterPro" id="IPR017452">
    <property type="entry name" value="GPCR_Rhodpsn_7TM"/>
</dbReference>
<dbReference type="PANTHER" id="PTHR10489">
    <property type="entry name" value="CELL ADHESION MOLECULE"/>
    <property type="match status" value="1"/>
</dbReference>
<dbReference type="PANTHER" id="PTHR10489:SF956">
    <property type="entry name" value="TYPE-1 ANGIOTENSIN II RECEPTOR A"/>
    <property type="match status" value="1"/>
</dbReference>
<dbReference type="Pfam" id="PF00001">
    <property type="entry name" value="7tm_1"/>
    <property type="match status" value="1"/>
</dbReference>
<dbReference type="PRINTS" id="PR00241">
    <property type="entry name" value="ANGIOTENSINR"/>
</dbReference>
<dbReference type="PRINTS" id="PR00635">
    <property type="entry name" value="ANGIOTENSN1R"/>
</dbReference>
<dbReference type="PRINTS" id="PR00237">
    <property type="entry name" value="GPCRRHODOPSN"/>
</dbReference>
<dbReference type="SMART" id="SM01381">
    <property type="entry name" value="7TM_GPCR_Srsx"/>
    <property type="match status" value="1"/>
</dbReference>
<dbReference type="SUPFAM" id="SSF81321">
    <property type="entry name" value="Family A G protein-coupled receptor-like"/>
    <property type="match status" value="1"/>
</dbReference>
<dbReference type="PROSITE" id="PS00237">
    <property type="entry name" value="G_PROTEIN_RECEP_F1_1"/>
    <property type="match status" value="1"/>
</dbReference>
<dbReference type="PROSITE" id="PS50262">
    <property type="entry name" value="G_PROTEIN_RECEP_F1_2"/>
    <property type="match status" value="1"/>
</dbReference>
<proteinExistence type="evidence at transcript level"/>
<sequence length="359" mass="40907">MILNSSTEDSIKRIQDDCPKAGRHNYIFVMIPTLYSIIFVVGIFGNSLVVIVIYFYMKLKTVASVFLLNLALADLCFLLTLPLWAVYTAMEYRWPFGNYLCKIASASVSFNLYASVFLLTCLSIDRYLAIVHPMKSRLRRTMLVAKVTCIIIWLLAGLASLPTIIHRNVFFIENTNITVCAFHYESQNSTLPVGLGLTKNILGFLFPFLIILTSYTLIWKALKKAYEIQKNKPRNDDIFKIIMAIVLFFFFSWVPHQIFTFLDVLIQLGIIHDCKIADIVDTAMPITICLAYFNNCLNPLFYGFLGKKFKKYFLQLLKYIPPKAKSHSSLSTKMSTLSYRPSENGSSSTKKSAPCTEVE</sequence>